<reference key="1">
    <citation type="journal article" date="2005" name="Genome Res.">
        <title>Sequence, annotation, and analysis of synteny between rice chromosome 3 and diverged grass species.</title>
        <authorList>
            <consortium name="The rice chromosome 3 sequencing consortium"/>
            <person name="Buell C.R."/>
            <person name="Yuan Q."/>
            <person name="Ouyang S."/>
            <person name="Liu J."/>
            <person name="Zhu W."/>
            <person name="Wang A."/>
            <person name="Maiti R."/>
            <person name="Haas B."/>
            <person name="Wortman J."/>
            <person name="Pertea M."/>
            <person name="Jones K.M."/>
            <person name="Kim M."/>
            <person name="Overton L."/>
            <person name="Tsitrin T."/>
            <person name="Fadrosh D."/>
            <person name="Bera J."/>
            <person name="Weaver B."/>
            <person name="Jin S."/>
            <person name="Johri S."/>
            <person name="Reardon M."/>
            <person name="Webb K."/>
            <person name="Hill J."/>
            <person name="Moffat K."/>
            <person name="Tallon L."/>
            <person name="Van Aken S."/>
            <person name="Lewis M."/>
            <person name="Utterback T."/>
            <person name="Feldblyum T."/>
            <person name="Zismann V."/>
            <person name="Iobst S."/>
            <person name="Hsiao J."/>
            <person name="de Vazeille A.R."/>
            <person name="Salzberg S.L."/>
            <person name="White O."/>
            <person name="Fraser C.M."/>
            <person name="Yu Y."/>
            <person name="Kim H."/>
            <person name="Rambo T."/>
            <person name="Currie J."/>
            <person name="Collura K."/>
            <person name="Kernodle-Thompson S."/>
            <person name="Wei F."/>
            <person name="Kudrna K."/>
            <person name="Ammiraju J.S.S."/>
            <person name="Luo M."/>
            <person name="Goicoechea J.L."/>
            <person name="Wing R.A."/>
            <person name="Henry D."/>
            <person name="Oates R."/>
            <person name="Palmer M."/>
            <person name="Pries G."/>
            <person name="Saski C."/>
            <person name="Simmons J."/>
            <person name="Soderlund C."/>
            <person name="Nelson W."/>
            <person name="de la Bastide M."/>
            <person name="Spiegel L."/>
            <person name="Nascimento L."/>
            <person name="Huang E."/>
            <person name="Preston R."/>
            <person name="Zutavern T."/>
            <person name="Palmer L."/>
            <person name="O'Shaughnessy A."/>
            <person name="Dike S."/>
            <person name="McCombie W.R."/>
            <person name="Minx P."/>
            <person name="Cordum H."/>
            <person name="Wilson R."/>
            <person name="Jin W."/>
            <person name="Lee H.R."/>
            <person name="Jiang J."/>
            <person name="Jackson S."/>
        </authorList>
    </citation>
    <scope>NUCLEOTIDE SEQUENCE [LARGE SCALE GENOMIC DNA]</scope>
    <source>
        <strain>cv. Nipponbare</strain>
    </source>
</reference>
<reference key="2">
    <citation type="journal article" date="2005" name="Nature">
        <title>The map-based sequence of the rice genome.</title>
        <authorList>
            <consortium name="International rice genome sequencing project (IRGSP)"/>
        </authorList>
    </citation>
    <scope>NUCLEOTIDE SEQUENCE [LARGE SCALE GENOMIC DNA]</scope>
    <source>
        <strain>cv. Nipponbare</strain>
    </source>
</reference>
<reference key="3">
    <citation type="journal article" date="2008" name="Nucleic Acids Res.">
        <title>The rice annotation project database (RAP-DB): 2008 update.</title>
        <authorList>
            <consortium name="The rice annotation project (RAP)"/>
        </authorList>
    </citation>
    <scope>GENOME REANNOTATION</scope>
    <source>
        <strain>cv. Nipponbare</strain>
    </source>
</reference>
<reference key="4">
    <citation type="journal article" date="2013" name="Rice">
        <title>Improvement of the Oryza sativa Nipponbare reference genome using next generation sequence and optical map data.</title>
        <authorList>
            <person name="Kawahara Y."/>
            <person name="de la Bastide M."/>
            <person name="Hamilton J.P."/>
            <person name="Kanamori H."/>
            <person name="McCombie W.R."/>
            <person name="Ouyang S."/>
            <person name="Schwartz D.C."/>
            <person name="Tanaka T."/>
            <person name="Wu J."/>
            <person name="Zhou S."/>
            <person name="Childs K.L."/>
            <person name="Davidson R.M."/>
            <person name="Lin H."/>
            <person name="Quesada-Ocampo L."/>
            <person name="Vaillancourt B."/>
            <person name="Sakai H."/>
            <person name="Lee S.S."/>
            <person name="Kim J."/>
            <person name="Numa H."/>
            <person name="Itoh T."/>
            <person name="Buell C.R."/>
            <person name="Matsumoto T."/>
        </authorList>
    </citation>
    <scope>GENOME REANNOTATION</scope>
    <source>
        <strain>cv. Nipponbare</strain>
    </source>
</reference>
<reference key="5">
    <citation type="journal article" date="2006" name="Mol. Genet. Genomics">
        <title>Genome-wide analysis of cyclin family in rice (Oryza sativa L.).</title>
        <authorList>
            <person name="La H."/>
            <person name="Li J."/>
            <person name="Ji Z."/>
            <person name="Cheng Y."/>
            <person name="Li X."/>
            <person name="Jiang S."/>
            <person name="Venkatesh P.N."/>
            <person name="Ramachandran S."/>
        </authorList>
    </citation>
    <scope>GENE FAMILY</scope>
    <scope>NOMENCLATURE</scope>
</reference>
<keyword id="KW-0131">Cell cycle</keyword>
<keyword id="KW-0132">Cell division</keyword>
<keyword id="KW-0195">Cyclin</keyword>
<keyword id="KW-1185">Reference proteome</keyword>
<gene>
    <name type="primary">CYCF3-1</name>
    <name type="ordered locus">Os03g0208700</name>
    <name type="ordered locus">LOC_Os03g11030</name>
</gene>
<comment type="similarity">
    <text evidence="2">Belongs to the cyclin family. Cyclin F subfamily.</text>
</comment>
<dbReference type="EMBL" id="DP000009">
    <property type="protein sequence ID" value="ABF94569.1"/>
    <property type="molecule type" value="Genomic_DNA"/>
</dbReference>
<dbReference type="EMBL" id="AP008209">
    <property type="status" value="NOT_ANNOTATED_CDS"/>
    <property type="molecule type" value="Genomic_DNA"/>
</dbReference>
<dbReference type="EMBL" id="AP014959">
    <property type="status" value="NOT_ANNOTATED_CDS"/>
    <property type="molecule type" value="Genomic_DNA"/>
</dbReference>
<dbReference type="SMR" id="Q10Q63"/>
<dbReference type="FunCoup" id="Q10Q63">
    <property type="interactions" value="19"/>
</dbReference>
<dbReference type="STRING" id="39947.Q10Q63"/>
<dbReference type="PaxDb" id="39947-Q10Q63"/>
<dbReference type="InParanoid" id="Q10Q63"/>
<dbReference type="Proteomes" id="UP000000763">
    <property type="component" value="Chromosome 3"/>
</dbReference>
<dbReference type="Proteomes" id="UP000059680">
    <property type="component" value="Chromosome 3"/>
</dbReference>
<dbReference type="GO" id="GO:0000307">
    <property type="term" value="C:cyclin-dependent protein kinase holoenzyme complex"/>
    <property type="evidence" value="ECO:0000318"/>
    <property type="project" value="GO_Central"/>
</dbReference>
<dbReference type="GO" id="GO:0005737">
    <property type="term" value="C:cytoplasm"/>
    <property type="evidence" value="ECO:0000318"/>
    <property type="project" value="GO_Central"/>
</dbReference>
<dbReference type="GO" id="GO:0005634">
    <property type="term" value="C:nucleus"/>
    <property type="evidence" value="ECO:0000318"/>
    <property type="project" value="GO_Central"/>
</dbReference>
<dbReference type="GO" id="GO:0016538">
    <property type="term" value="F:cyclin-dependent protein serine/threonine kinase regulator activity"/>
    <property type="evidence" value="ECO:0000318"/>
    <property type="project" value="GO_Central"/>
</dbReference>
<dbReference type="GO" id="GO:0051301">
    <property type="term" value="P:cell division"/>
    <property type="evidence" value="ECO:0007669"/>
    <property type="project" value="UniProtKB-KW"/>
</dbReference>
<dbReference type="GO" id="GO:0000082">
    <property type="term" value="P:G1/S transition of mitotic cell cycle"/>
    <property type="evidence" value="ECO:0000318"/>
    <property type="project" value="GO_Central"/>
</dbReference>
<dbReference type="FunFam" id="1.10.472.10:FF:000220">
    <property type="entry name" value="Cyclin superfamily protein, putative"/>
    <property type="match status" value="1"/>
</dbReference>
<dbReference type="FunFam" id="1.10.472.10:FF:000010">
    <property type="entry name" value="G1/S-specific cyclin Cln1"/>
    <property type="match status" value="1"/>
</dbReference>
<dbReference type="Gene3D" id="1.10.472.10">
    <property type="entry name" value="Cyclin-like"/>
    <property type="match status" value="2"/>
</dbReference>
<dbReference type="InterPro" id="IPR039361">
    <property type="entry name" value="Cyclin"/>
</dbReference>
<dbReference type="InterPro" id="IPR013763">
    <property type="entry name" value="Cyclin-like_dom"/>
</dbReference>
<dbReference type="InterPro" id="IPR036915">
    <property type="entry name" value="Cyclin-like_sf"/>
</dbReference>
<dbReference type="InterPro" id="IPR004367">
    <property type="entry name" value="Cyclin_C-dom"/>
</dbReference>
<dbReference type="InterPro" id="IPR006671">
    <property type="entry name" value="Cyclin_N"/>
</dbReference>
<dbReference type="InterPro" id="IPR048258">
    <property type="entry name" value="Cyclins_cyclin-box"/>
</dbReference>
<dbReference type="PANTHER" id="PTHR10177">
    <property type="entry name" value="CYCLINS"/>
    <property type="match status" value="1"/>
</dbReference>
<dbReference type="Pfam" id="PF02984">
    <property type="entry name" value="Cyclin_C"/>
    <property type="match status" value="1"/>
</dbReference>
<dbReference type="Pfam" id="PF00134">
    <property type="entry name" value="Cyclin_N"/>
    <property type="match status" value="1"/>
</dbReference>
<dbReference type="SMART" id="SM00385">
    <property type="entry name" value="CYCLIN"/>
    <property type="match status" value="2"/>
</dbReference>
<dbReference type="SMART" id="SM01332">
    <property type="entry name" value="Cyclin_C"/>
    <property type="match status" value="1"/>
</dbReference>
<dbReference type="SUPFAM" id="SSF47954">
    <property type="entry name" value="Cyclin-like"/>
    <property type="match status" value="2"/>
</dbReference>
<dbReference type="PROSITE" id="PS00292">
    <property type="entry name" value="CYCLINS"/>
    <property type="match status" value="1"/>
</dbReference>
<accession>Q10Q63</accession>
<organism>
    <name type="scientific">Oryza sativa subsp. japonica</name>
    <name type="common">Rice</name>
    <dbReference type="NCBI Taxonomy" id="39947"/>
    <lineage>
        <taxon>Eukaryota</taxon>
        <taxon>Viridiplantae</taxon>
        <taxon>Streptophyta</taxon>
        <taxon>Embryophyta</taxon>
        <taxon>Tracheophyta</taxon>
        <taxon>Spermatophyta</taxon>
        <taxon>Magnoliopsida</taxon>
        <taxon>Liliopsida</taxon>
        <taxon>Poales</taxon>
        <taxon>Poaceae</taxon>
        <taxon>BOP clade</taxon>
        <taxon>Oryzoideae</taxon>
        <taxon>Oryzeae</taxon>
        <taxon>Oryzinae</taxon>
        <taxon>Oryza</taxon>
        <taxon>Oryza sativa</taxon>
    </lineage>
</organism>
<sequence>MEAAAAAAAEEEAGNPDGVEGAAVAAVAPEAAAEGPSEPNAGEASREPDAGQASREPGAAGPSREPDVAGPSREPDAAGPSREPGAAGGSREPGAAGGSRQPVPDAAQLAVVPYVEDIDRYLRSLEAEQTRRPMINYVQEIQGGIINMDVRGILVDWMADVAYVFNLQEETLHHAVSYVDRFLSKIAFPGDKLKLLGTTALFVASKYEEIHPPHVRNFSAVTVNTYTTQQVSKMELDILRFLNFDVGSPTVITFLRKFLTSCCGGNNSSNRKLELMCNYLAELSLLDDYYIRFLPSIVAAACLFVGKFTLNPNTRPWFGSVSTITPPENIKGGVEKYMVSRIYMCVFDLPMLFLMETWSSSGVSNHTKLQLKQNMMELPIENPTFISAS</sequence>
<feature type="chain" id="PRO_0000287047" description="Putative cyclin-F3-1">
    <location>
        <begin position="1"/>
        <end position="389"/>
    </location>
</feature>
<feature type="region of interest" description="Disordered" evidence="1">
    <location>
        <begin position="1"/>
        <end position="103"/>
    </location>
</feature>
<feature type="compositionally biased region" description="Low complexity" evidence="1">
    <location>
        <begin position="19"/>
        <end position="43"/>
    </location>
</feature>
<name>CCF31_ORYSJ</name>
<proteinExistence type="inferred from homology"/>
<protein>
    <recommendedName>
        <fullName>Putative cyclin-F3-1</fullName>
        <shortName>CycF3;1</shortName>
    </recommendedName>
</protein>
<evidence type="ECO:0000256" key="1">
    <source>
        <dbReference type="SAM" id="MobiDB-lite"/>
    </source>
</evidence>
<evidence type="ECO:0000305" key="2"/>